<evidence type="ECO:0000255" key="1">
    <source>
        <dbReference type="HAMAP-Rule" id="MF_00059"/>
    </source>
</evidence>
<evidence type="ECO:0000305" key="2"/>
<accession>P09562</accession>
<reference key="1">
    <citation type="journal article" date="1988" name="Nucleic Acids Res.">
        <title>Structure and expression of the gene coding for the alpha-subunit of DNA-dependent RNA polymerase from the chloroplast genome of Zea mays.</title>
        <authorList>
            <person name="Ruf M."/>
            <person name="Koessel H."/>
        </authorList>
    </citation>
    <scope>NUCLEOTIDE SEQUENCE [LARGE SCALE GENOMIC DNA]</scope>
    <source>
        <strain>cv. B73</strain>
    </source>
</reference>
<reference key="2">
    <citation type="journal article" date="1995" name="J. Mol. Biol.">
        <title>Complete sequence of the maize chloroplast genome: gene content, hotspots of divergence and fine tuning of genetic information by transcript editing.</title>
        <authorList>
            <person name="Maier R.M."/>
            <person name="Neckermann K."/>
            <person name="Igloi G.L."/>
            <person name="Koessel H."/>
        </authorList>
    </citation>
    <scope>NUCLEOTIDE SEQUENCE [LARGE SCALE GENOMIC DNA]</scope>
    <source>
        <strain>cv. B73</strain>
    </source>
</reference>
<reference key="3">
    <citation type="journal article" date="1990" name="Proc. Natl. Acad. Sci. U.S.A.">
        <title>Maize chloroplast RNA polymerase: the 180-, 120-, and 38-kilodalton polypeptides are encoded in chloroplast genes.</title>
        <authorList>
            <person name="Hu J."/>
            <person name="Bogorad L."/>
        </authorList>
    </citation>
    <scope>PROTEIN SEQUENCE OF 1-18</scope>
</reference>
<reference key="4">
    <citation type="journal article" date="1988" name="Biochem. Int.">
        <title>Nucleotide sequence of maize chloroplast rpS11 with conserved amino acid sequence between eukaryotes, bacteria and plastids.</title>
        <authorList>
            <person name="Markmann-Mulisch U."/>
            <person name="Subramanian A.R."/>
        </authorList>
    </citation>
    <scope>NUCLEOTIDE SEQUENCE [GENOMIC DNA] OF 1-9</scope>
</reference>
<gene>
    <name evidence="1" type="primary">rpoA</name>
</gene>
<sequence length="339" mass="38947">MVREEITGSTQTLEWKCVESRVDSKRLYYGRFILSPLRKGQADTVGIALRRALLGEIEGTCITRAKFGNVPHEYSTIVGIEESIQEILLNLKEIVLRSNLYGVRDASICVKGPRYITAQDIILPPSVEIVDTTQPIANLREPVDFCIELQIKRDRAYHTELRKNSQDGSYPIDAVFMPVRNVNYSIFSCGNGNEKHEILFLEIWTNGSLTPKEALYEASRNLIDLFLPFLHTEEEGTSFEENKNRLTPPLLTFQKRFTNLKKNKKGIPLNCIFIDQLELPSRTYNCLKRANIHTLLDLLSKTEEDLMQINSFRMEDGKLIWDTLEKHLPIDLPKNKFSL</sequence>
<name>RPOA_MAIZE</name>
<protein>
    <recommendedName>
        <fullName evidence="1">DNA-directed RNA polymerase subunit alpha</fullName>
        <shortName evidence="1">PEP</shortName>
        <ecNumber evidence="1">2.7.7.6</ecNumber>
    </recommendedName>
    <alternativeName>
        <fullName evidence="1">Plastid-encoded RNA polymerase subunit alpha</fullName>
        <shortName evidence="1">RNA polymerase subunit alpha</shortName>
    </alternativeName>
</protein>
<geneLocation type="chloroplast"/>
<organism>
    <name type="scientific">Zea mays</name>
    <name type="common">Maize</name>
    <dbReference type="NCBI Taxonomy" id="4577"/>
    <lineage>
        <taxon>Eukaryota</taxon>
        <taxon>Viridiplantae</taxon>
        <taxon>Streptophyta</taxon>
        <taxon>Embryophyta</taxon>
        <taxon>Tracheophyta</taxon>
        <taxon>Spermatophyta</taxon>
        <taxon>Magnoliopsida</taxon>
        <taxon>Liliopsida</taxon>
        <taxon>Poales</taxon>
        <taxon>Poaceae</taxon>
        <taxon>PACMAD clade</taxon>
        <taxon>Panicoideae</taxon>
        <taxon>Andropogonodae</taxon>
        <taxon>Andropogoneae</taxon>
        <taxon>Tripsacinae</taxon>
        <taxon>Zea</taxon>
    </lineage>
</organism>
<proteinExistence type="evidence at protein level"/>
<dbReference type="EC" id="2.7.7.6" evidence="1"/>
<dbReference type="EMBL" id="X07810">
    <property type="protein sequence ID" value="CAA30670.1"/>
    <property type="molecule type" value="Genomic_DNA"/>
</dbReference>
<dbReference type="EMBL" id="X86563">
    <property type="protein sequence ID" value="CAA60317.1"/>
    <property type="molecule type" value="Genomic_DNA"/>
</dbReference>
<dbReference type="EMBL" id="M35831">
    <property type="protein sequence ID" value="AAA84495.1"/>
    <property type="molecule type" value="Genomic_DNA"/>
</dbReference>
<dbReference type="PIR" id="S00977">
    <property type="entry name" value="RNZMA"/>
</dbReference>
<dbReference type="PIR" id="S58583">
    <property type="entry name" value="S58583"/>
</dbReference>
<dbReference type="RefSeq" id="NP_043055.1">
    <property type="nucleotide sequence ID" value="NC_001666.2"/>
</dbReference>
<dbReference type="SMR" id="P09562"/>
<dbReference type="FunCoup" id="P09562">
    <property type="interactions" value="99"/>
</dbReference>
<dbReference type="STRING" id="4577.P09562"/>
<dbReference type="PaxDb" id="4577-GRMZM5G879235_P01"/>
<dbReference type="GeneID" id="845224"/>
<dbReference type="KEGG" id="zma:845224"/>
<dbReference type="MaizeGDB" id="67212"/>
<dbReference type="eggNOG" id="ENOG502QRS7">
    <property type="taxonomic scope" value="Eukaryota"/>
</dbReference>
<dbReference type="HOGENOM" id="CLU_053084_2_0_1"/>
<dbReference type="InParanoid" id="P09562"/>
<dbReference type="OMA" id="KFHAPGP"/>
<dbReference type="OrthoDB" id="723447at2759"/>
<dbReference type="Proteomes" id="UP000007305">
    <property type="component" value="Chloroplast"/>
</dbReference>
<dbReference type="ExpressionAtlas" id="P09562">
    <property type="expression patterns" value="baseline"/>
</dbReference>
<dbReference type="GO" id="GO:0009507">
    <property type="term" value="C:chloroplast"/>
    <property type="evidence" value="ECO:0007669"/>
    <property type="project" value="UniProtKB-SubCell"/>
</dbReference>
<dbReference type="GO" id="GO:0000428">
    <property type="term" value="C:DNA-directed RNA polymerase complex"/>
    <property type="evidence" value="ECO:0007669"/>
    <property type="project" value="UniProtKB-KW"/>
</dbReference>
<dbReference type="GO" id="GO:0005739">
    <property type="term" value="C:mitochondrion"/>
    <property type="evidence" value="ECO:0007669"/>
    <property type="project" value="GOC"/>
</dbReference>
<dbReference type="GO" id="GO:0003677">
    <property type="term" value="F:DNA binding"/>
    <property type="evidence" value="ECO:0007669"/>
    <property type="project" value="UniProtKB-UniRule"/>
</dbReference>
<dbReference type="GO" id="GO:0003899">
    <property type="term" value="F:DNA-directed RNA polymerase activity"/>
    <property type="evidence" value="ECO:0007669"/>
    <property type="project" value="UniProtKB-UniRule"/>
</dbReference>
<dbReference type="GO" id="GO:0046983">
    <property type="term" value="F:protein dimerization activity"/>
    <property type="evidence" value="ECO:0007669"/>
    <property type="project" value="InterPro"/>
</dbReference>
<dbReference type="GO" id="GO:0006351">
    <property type="term" value="P:DNA-templated transcription"/>
    <property type="evidence" value="ECO:0007669"/>
    <property type="project" value="UniProtKB-UniRule"/>
</dbReference>
<dbReference type="CDD" id="cd06928">
    <property type="entry name" value="RNAP_alpha_NTD"/>
    <property type="match status" value="1"/>
</dbReference>
<dbReference type="FunFam" id="1.10.150.20:FF:000021">
    <property type="entry name" value="DNA-directed RNA polymerase subunit alpha"/>
    <property type="match status" value="1"/>
</dbReference>
<dbReference type="FunFam" id="2.170.120.12:FF:000001">
    <property type="entry name" value="DNA-directed RNA polymerase subunit alpha"/>
    <property type="match status" value="1"/>
</dbReference>
<dbReference type="Gene3D" id="1.10.150.20">
    <property type="entry name" value="5' to 3' exonuclease, C-terminal subdomain"/>
    <property type="match status" value="1"/>
</dbReference>
<dbReference type="Gene3D" id="2.170.120.12">
    <property type="entry name" value="DNA-directed RNA polymerase, insert domain"/>
    <property type="match status" value="1"/>
</dbReference>
<dbReference type="Gene3D" id="3.30.1360.10">
    <property type="entry name" value="RNA polymerase, RBP11-like subunit"/>
    <property type="match status" value="1"/>
</dbReference>
<dbReference type="HAMAP" id="MF_00059">
    <property type="entry name" value="RNApol_bact_RpoA"/>
    <property type="match status" value="1"/>
</dbReference>
<dbReference type="InterPro" id="IPR011262">
    <property type="entry name" value="DNA-dir_RNA_pol_insert"/>
</dbReference>
<dbReference type="InterPro" id="IPR011263">
    <property type="entry name" value="DNA-dir_RNA_pol_RpoA/D/Rpb3"/>
</dbReference>
<dbReference type="InterPro" id="IPR011773">
    <property type="entry name" value="DNA-dir_RpoA"/>
</dbReference>
<dbReference type="InterPro" id="IPR036603">
    <property type="entry name" value="RBP11-like"/>
</dbReference>
<dbReference type="InterPro" id="IPR011260">
    <property type="entry name" value="RNAP_asu_C"/>
</dbReference>
<dbReference type="InterPro" id="IPR036643">
    <property type="entry name" value="RNApol_insert_sf"/>
</dbReference>
<dbReference type="NCBIfam" id="TIGR02027">
    <property type="entry name" value="rpoA"/>
    <property type="match status" value="1"/>
</dbReference>
<dbReference type="Pfam" id="PF01000">
    <property type="entry name" value="RNA_pol_A_bac"/>
    <property type="match status" value="1"/>
</dbReference>
<dbReference type="Pfam" id="PF03118">
    <property type="entry name" value="RNA_pol_A_CTD"/>
    <property type="match status" value="1"/>
</dbReference>
<dbReference type="Pfam" id="PF01193">
    <property type="entry name" value="RNA_pol_L"/>
    <property type="match status" value="1"/>
</dbReference>
<dbReference type="SMART" id="SM00662">
    <property type="entry name" value="RPOLD"/>
    <property type="match status" value="1"/>
</dbReference>
<dbReference type="SUPFAM" id="SSF47789">
    <property type="entry name" value="C-terminal domain of RNA polymerase alpha subunit"/>
    <property type="match status" value="1"/>
</dbReference>
<dbReference type="SUPFAM" id="SSF56553">
    <property type="entry name" value="Insert subdomain of RNA polymerase alpha subunit"/>
    <property type="match status" value="1"/>
</dbReference>
<dbReference type="SUPFAM" id="SSF55257">
    <property type="entry name" value="RBP11-like subunits of RNA polymerase"/>
    <property type="match status" value="1"/>
</dbReference>
<feature type="chain" id="PRO_0000175468" description="DNA-directed RNA polymerase subunit alpha">
    <location>
        <begin position="1"/>
        <end position="339"/>
    </location>
</feature>
<feature type="region of interest" description="Alpha N-terminal domain (alpha-NTD)" evidence="1">
    <location>
        <begin position="1"/>
        <end position="233"/>
    </location>
</feature>
<feature type="region of interest" description="Alpha C-terminal domain (alpha-CTD)" evidence="1">
    <location>
        <begin position="264"/>
        <end position="339"/>
    </location>
</feature>
<feature type="sequence conflict" description="In Ref. 1; CAA30670." evidence="2" ref="1">
    <original>V</original>
    <variation>D</variation>
    <location>
        <position position="130"/>
    </location>
</feature>
<feature type="sequence conflict" description="In Ref. 1; CAA30670." evidence="2" ref="1">
    <original>S</original>
    <variation>K</variation>
    <location>
        <position position="208"/>
    </location>
</feature>
<feature type="sequence conflict" description="In Ref. 1; CAA30670." evidence="2" ref="1">
    <original>AL</original>
    <variation>GGI</variation>
    <location>
        <begin position="214"/>
        <end position="215"/>
    </location>
</feature>
<feature type="sequence conflict" description="In Ref. 1; CAA30670." evidence="2" ref="1">
    <original>HT</original>
    <variation>PSA</variation>
    <location>
        <begin position="293"/>
        <end position="294"/>
    </location>
</feature>
<feature type="sequence conflict" description="In Ref. 1; CAA30670." evidence="2" ref="1">
    <original>S</original>
    <variation>V</variation>
    <location>
        <position position="300"/>
    </location>
</feature>
<feature type="sequence conflict" description="In Ref. 1; CAA30670." evidence="2" ref="1">
    <original>MQ</original>
    <variation>IK</variation>
    <location>
        <begin position="307"/>
        <end position="308"/>
    </location>
</feature>
<feature type="sequence conflict" description="In Ref. 1; CAA30670." evidence="2" ref="1">
    <original>R</original>
    <variation>G</variation>
    <location>
        <position position="313"/>
    </location>
</feature>
<comment type="function">
    <text>DNA-dependent RNA polymerase catalyzes the transcription of DNA into RNA using the four ribonucleoside triphosphates as substrates.</text>
</comment>
<comment type="catalytic activity">
    <reaction evidence="1">
        <text>RNA(n) + a ribonucleoside 5'-triphosphate = RNA(n+1) + diphosphate</text>
        <dbReference type="Rhea" id="RHEA:21248"/>
        <dbReference type="Rhea" id="RHEA-COMP:14527"/>
        <dbReference type="Rhea" id="RHEA-COMP:17342"/>
        <dbReference type="ChEBI" id="CHEBI:33019"/>
        <dbReference type="ChEBI" id="CHEBI:61557"/>
        <dbReference type="ChEBI" id="CHEBI:140395"/>
        <dbReference type="EC" id="2.7.7.6"/>
    </reaction>
</comment>
<comment type="subunit">
    <text evidence="1">In plastids the minimal PEP RNA polymerase catalytic core is composed of four subunits: alpha, beta, beta', and beta''. When a (nuclear-encoded) sigma factor is associated with the core the holoenzyme is formed, which can initiate transcription.</text>
</comment>
<comment type="subcellular location">
    <subcellularLocation>
        <location>Plastid</location>
        <location>Chloroplast</location>
    </subcellularLocation>
</comment>
<comment type="domain">
    <text evidence="1">The N-terminal domain is essential for RNAP assembly and basal transcription, whereas the C-terminal domain is involved in interaction with transcriptional regulators and with upstream promoter elements.</text>
</comment>
<comment type="similarity">
    <text evidence="1">Belongs to the RNA polymerase alpha chain family.</text>
</comment>
<keyword id="KW-0150">Chloroplast</keyword>
<keyword id="KW-0903">Direct protein sequencing</keyword>
<keyword id="KW-0240">DNA-directed RNA polymerase</keyword>
<keyword id="KW-0548">Nucleotidyltransferase</keyword>
<keyword id="KW-0934">Plastid</keyword>
<keyword id="KW-1185">Reference proteome</keyword>
<keyword id="KW-0804">Transcription</keyword>
<keyword id="KW-0808">Transferase</keyword>